<name>UIF_SALSA</name>
<sequence length="331" mass="36662">MSNVGFSATRGITSGAPDKVDMSLDDIIRLNKKEQQARRPSPGNRRPLQKGKVFVQGRPVGARARGQTQRGGGVPRGAITRAGVGRGRKIPPPVGRRRGQGVITGLAARKTAALQKGISPLNRPAINRKLQPFNNRSRPFNNQSRPFIQSAQYRQMQGQRRPYRQTDIQRGLNSTRPFQQRRRPLPPVQTQREARQATFLFRRGLKVHTQVPKPALTSIPPAPVRPRQWRTSTNSSGILTVSIDNPTAMTQSEPPCAWSLHPPAPTSSAPVKMKVEEEKKTEPPKGVPLQFDINIVGKPTAMTLNERFRILKDERVATAQTSKGSRFVTVG</sequence>
<gene>
    <name type="primary">fyttd1</name>
    <name type="synonym">uif</name>
</gene>
<evidence type="ECO:0000250" key="1"/>
<evidence type="ECO:0000256" key="2">
    <source>
        <dbReference type="SAM" id="MobiDB-lite"/>
    </source>
</evidence>
<evidence type="ECO:0000305" key="3"/>
<organism>
    <name type="scientific">Salmo salar</name>
    <name type="common">Atlantic salmon</name>
    <dbReference type="NCBI Taxonomy" id="8030"/>
    <lineage>
        <taxon>Eukaryota</taxon>
        <taxon>Metazoa</taxon>
        <taxon>Chordata</taxon>
        <taxon>Craniata</taxon>
        <taxon>Vertebrata</taxon>
        <taxon>Euteleostomi</taxon>
        <taxon>Actinopterygii</taxon>
        <taxon>Neopterygii</taxon>
        <taxon>Teleostei</taxon>
        <taxon>Protacanthopterygii</taxon>
        <taxon>Salmoniformes</taxon>
        <taxon>Salmonidae</taxon>
        <taxon>Salmoninae</taxon>
        <taxon>Salmo</taxon>
    </lineage>
</organism>
<keyword id="KW-0509">mRNA transport</keyword>
<keyword id="KW-0539">Nucleus</keyword>
<keyword id="KW-1185">Reference proteome</keyword>
<keyword id="KW-0694">RNA-binding</keyword>
<keyword id="KW-0813">Transport</keyword>
<dbReference type="EMBL" id="BT045721">
    <property type="protein sequence ID" value="ACI33983.1"/>
    <property type="molecule type" value="mRNA"/>
</dbReference>
<dbReference type="RefSeq" id="NP_001133831.1">
    <property type="nucleotide sequence ID" value="NM_001140359.1"/>
</dbReference>
<dbReference type="STRING" id="8030.ENSSSAP00000050386"/>
<dbReference type="PaxDb" id="8030-ENSSSAP00000050386"/>
<dbReference type="Ensembl" id="ENSSSAT00070056125">
    <property type="protein sequence ID" value="ENSSSAP00070053902"/>
    <property type="gene ID" value="ENSSSAG00070034988"/>
</dbReference>
<dbReference type="GeneID" id="100195330"/>
<dbReference type="KEGG" id="sasa:100195330"/>
<dbReference type="CTD" id="100195330"/>
<dbReference type="Proteomes" id="UP000087266">
    <property type="component" value="Chromosome ssa03"/>
</dbReference>
<dbReference type="Bgee" id="ENSSSAG00000050355">
    <property type="expression patterns" value="Expressed in ovary and 25 other cell types or tissues"/>
</dbReference>
<dbReference type="GO" id="GO:0016607">
    <property type="term" value="C:nuclear speck"/>
    <property type="evidence" value="ECO:0000250"/>
    <property type="project" value="UniProtKB"/>
</dbReference>
<dbReference type="GO" id="GO:0005654">
    <property type="term" value="C:nucleoplasm"/>
    <property type="evidence" value="ECO:0000250"/>
    <property type="project" value="UniProtKB"/>
</dbReference>
<dbReference type="GO" id="GO:0003729">
    <property type="term" value="F:mRNA binding"/>
    <property type="evidence" value="ECO:0000250"/>
    <property type="project" value="UniProtKB"/>
</dbReference>
<dbReference type="GO" id="GO:0006406">
    <property type="term" value="P:mRNA export from nucleus"/>
    <property type="evidence" value="ECO:0000250"/>
    <property type="project" value="UniProtKB"/>
</dbReference>
<dbReference type="InterPro" id="IPR009782">
    <property type="entry name" value="FYTTD1"/>
</dbReference>
<dbReference type="PANTHER" id="PTHR21038">
    <property type="entry name" value="40-2-3 PROTEIN-RELATED"/>
    <property type="match status" value="1"/>
</dbReference>
<dbReference type="PANTHER" id="PTHR21038:SF2">
    <property type="entry name" value="UAP56-INTERACTING FACTOR"/>
    <property type="match status" value="1"/>
</dbReference>
<dbReference type="Pfam" id="PF07078">
    <property type="entry name" value="FYTT"/>
    <property type="match status" value="1"/>
</dbReference>
<proteinExistence type="evidence at transcript level"/>
<reference key="1">
    <citation type="journal article" date="2010" name="BMC Genomics">
        <title>Salmo salar and Esox lucius full-length cDNA sequences reveal changes in evolutionary pressures on a post-tetraploidization genome.</title>
        <authorList>
            <person name="Leong J.S."/>
            <person name="Jantzen S.G."/>
            <person name="von Schalburg K.R."/>
            <person name="Cooper G.A."/>
            <person name="Messmer A.M."/>
            <person name="Liao N.Y."/>
            <person name="Munro S."/>
            <person name="Moore R."/>
            <person name="Holt R.A."/>
            <person name="Jones S.J."/>
            <person name="Davidson W.S."/>
            <person name="Koop B.F."/>
        </authorList>
    </citation>
    <scope>NUCLEOTIDE SEQUENCE [LARGE SCALE MRNA]</scope>
    <source>
        <tissue>Brain</tissue>
    </source>
</reference>
<protein>
    <recommendedName>
        <fullName>UAP56-interacting factor</fullName>
    </recommendedName>
    <alternativeName>
        <fullName>Forty-two-three domain-containing protein 1</fullName>
        <shortName>Protein 40-2-3</shortName>
    </alternativeName>
</protein>
<comment type="function">
    <text evidence="1">Required for mRNA export from the nucleus to the cytoplasm. Acts as an adapter that uses the ddx39b/uap56-nfx1 pathway to ensure efficient mRNA export and delivering to the nuclear pore (By similarity).</text>
</comment>
<comment type="subcellular location">
    <subcellularLocation>
        <location evidence="1">Nucleus</location>
        <location evidence="1">Nucleoplasm</location>
    </subcellularLocation>
    <subcellularLocation>
        <location evidence="1">Nucleus speckle</location>
    </subcellularLocation>
</comment>
<comment type="similarity">
    <text evidence="3">Belongs to the UIF family.</text>
</comment>
<accession>B5X3V2</accession>
<feature type="chain" id="PRO_0000390996" description="UAP56-interacting factor">
    <location>
        <begin position="1"/>
        <end position="331"/>
    </location>
</feature>
<feature type="region of interest" description="Disordered" evidence="2">
    <location>
        <begin position="30"/>
        <end position="51"/>
    </location>
</feature>
<feature type="region of interest" description="Disordered" evidence="2">
    <location>
        <begin position="63"/>
        <end position="99"/>
    </location>
</feature>
<feature type="region of interest" description="Disordered" evidence="2">
    <location>
        <begin position="158"/>
        <end position="193"/>
    </location>
</feature>
<feature type="short sequence motif" description="UAP56-binding motif">
    <location>
        <begin position="16"/>
        <end position="34"/>
    </location>
</feature>
<feature type="compositionally biased region" description="Polar residues" evidence="2">
    <location>
        <begin position="166"/>
        <end position="175"/>
    </location>
</feature>